<protein>
    <recommendedName>
        <fullName evidence="1">Methionyl-tRNA formyltransferase</fullName>
        <ecNumber evidence="1">2.1.2.9</ecNumber>
    </recommendedName>
</protein>
<comment type="function">
    <text evidence="1">Attaches a formyl group to the free amino group of methionyl-tRNA(fMet). The formyl group appears to play a dual role in the initiator identity of N-formylmethionyl-tRNA by promoting its recognition by IF2 and preventing the misappropriation of this tRNA by the elongation apparatus.</text>
</comment>
<comment type="catalytic activity">
    <reaction evidence="1">
        <text>L-methionyl-tRNA(fMet) + (6R)-10-formyltetrahydrofolate = N-formyl-L-methionyl-tRNA(fMet) + (6S)-5,6,7,8-tetrahydrofolate + H(+)</text>
        <dbReference type="Rhea" id="RHEA:24380"/>
        <dbReference type="Rhea" id="RHEA-COMP:9952"/>
        <dbReference type="Rhea" id="RHEA-COMP:9953"/>
        <dbReference type="ChEBI" id="CHEBI:15378"/>
        <dbReference type="ChEBI" id="CHEBI:57453"/>
        <dbReference type="ChEBI" id="CHEBI:78530"/>
        <dbReference type="ChEBI" id="CHEBI:78844"/>
        <dbReference type="ChEBI" id="CHEBI:195366"/>
        <dbReference type="EC" id="2.1.2.9"/>
    </reaction>
</comment>
<comment type="similarity">
    <text evidence="1">Belongs to the Fmt family.</text>
</comment>
<gene>
    <name evidence="1" type="primary">fmt</name>
    <name type="ordered locus">Pro_0997</name>
</gene>
<reference key="1">
    <citation type="journal article" date="2003" name="Proc. Natl. Acad. Sci. U.S.A.">
        <title>Genome sequence of the cyanobacterium Prochlorococcus marinus SS120, a nearly minimal oxyphototrophic genome.</title>
        <authorList>
            <person name="Dufresne A."/>
            <person name="Salanoubat M."/>
            <person name="Partensky F."/>
            <person name="Artiguenave F."/>
            <person name="Axmann I.M."/>
            <person name="Barbe V."/>
            <person name="Duprat S."/>
            <person name="Galperin M.Y."/>
            <person name="Koonin E.V."/>
            <person name="Le Gall F."/>
            <person name="Makarova K.S."/>
            <person name="Ostrowski M."/>
            <person name="Oztas S."/>
            <person name="Robert C."/>
            <person name="Rogozin I.B."/>
            <person name="Scanlan D.J."/>
            <person name="Tandeau de Marsac N."/>
            <person name="Weissenbach J."/>
            <person name="Wincker P."/>
            <person name="Wolf Y.I."/>
            <person name="Hess W.R."/>
        </authorList>
    </citation>
    <scope>NUCLEOTIDE SEQUENCE [LARGE SCALE GENOMIC DNA]</scope>
    <source>
        <strain>SARG / CCMP1375 / SS120</strain>
    </source>
</reference>
<accession>Q7VBU5</accession>
<dbReference type="EC" id="2.1.2.9" evidence="1"/>
<dbReference type="EMBL" id="AE017126">
    <property type="protein sequence ID" value="AAQ00042.1"/>
    <property type="molecule type" value="Genomic_DNA"/>
</dbReference>
<dbReference type="RefSeq" id="NP_875389.1">
    <property type="nucleotide sequence ID" value="NC_005042.1"/>
</dbReference>
<dbReference type="RefSeq" id="WP_011125149.1">
    <property type="nucleotide sequence ID" value="NC_005042.1"/>
</dbReference>
<dbReference type="SMR" id="Q7VBU5"/>
<dbReference type="STRING" id="167539.Pro_0997"/>
<dbReference type="EnsemblBacteria" id="AAQ00042">
    <property type="protein sequence ID" value="AAQ00042"/>
    <property type="gene ID" value="Pro_0997"/>
</dbReference>
<dbReference type="KEGG" id="pma:Pro_0997"/>
<dbReference type="PATRIC" id="fig|167539.5.peg.1047"/>
<dbReference type="eggNOG" id="COG0223">
    <property type="taxonomic scope" value="Bacteria"/>
</dbReference>
<dbReference type="HOGENOM" id="CLU_033347_1_1_3"/>
<dbReference type="OrthoDB" id="9802815at2"/>
<dbReference type="Proteomes" id="UP000001420">
    <property type="component" value="Chromosome"/>
</dbReference>
<dbReference type="GO" id="GO:0005829">
    <property type="term" value="C:cytosol"/>
    <property type="evidence" value="ECO:0007669"/>
    <property type="project" value="TreeGrafter"/>
</dbReference>
<dbReference type="GO" id="GO:0004479">
    <property type="term" value="F:methionyl-tRNA formyltransferase activity"/>
    <property type="evidence" value="ECO:0007669"/>
    <property type="project" value="UniProtKB-UniRule"/>
</dbReference>
<dbReference type="CDD" id="cd08646">
    <property type="entry name" value="FMT_core_Met-tRNA-FMT_N"/>
    <property type="match status" value="1"/>
</dbReference>
<dbReference type="CDD" id="cd08704">
    <property type="entry name" value="Met_tRNA_FMT_C"/>
    <property type="match status" value="1"/>
</dbReference>
<dbReference type="Gene3D" id="3.40.50.12230">
    <property type="match status" value="1"/>
</dbReference>
<dbReference type="HAMAP" id="MF_00182">
    <property type="entry name" value="Formyl_trans"/>
    <property type="match status" value="1"/>
</dbReference>
<dbReference type="InterPro" id="IPR005794">
    <property type="entry name" value="Fmt"/>
</dbReference>
<dbReference type="InterPro" id="IPR005793">
    <property type="entry name" value="Formyl_trans_C"/>
</dbReference>
<dbReference type="InterPro" id="IPR002376">
    <property type="entry name" value="Formyl_transf_N"/>
</dbReference>
<dbReference type="InterPro" id="IPR036477">
    <property type="entry name" value="Formyl_transf_N_sf"/>
</dbReference>
<dbReference type="InterPro" id="IPR011034">
    <property type="entry name" value="Formyl_transferase-like_C_sf"/>
</dbReference>
<dbReference type="InterPro" id="IPR044135">
    <property type="entry name" value="Met-tRNA-FMT_C"/>
</dbReference>
<dbReference type="InterPro" id="IPR041711">
    <property type="entry name" value="Met-tRNA-FMT_N"/>
</dbReference>
<dbReference type="NCBIfam" id="TIGR00460">
    <property type="entry name" value="fmt"/>
    <property type="match status" value="1"/>
</dbReference>
<dbReference type="PANTHER" id="PTHR11138">
    <property type="entry name" value="METHIONYL-TRNA FORMYLTRANSFERASE"/>
    <property type="match status" value="1"/>
</dbReference>
<dbReference type="PANTHER" id="PTHR11138:SF5">
    <property type="entry name" value="METHIONYL-TRNA FORMYLTRANSFERASE, MITOCHONDRIAL"/>
    <property type="match status" value="1"/>
</dbReference>
<dbReference type="Pfam" id="PF02911">
    <property type="entry name" value="Formyl_trans_C"/>
    <property type="match status" value="1"/>
</dbReference>
<dbReference type="Pfam" id="PF00551">
    <property type="entry name" value="Formyl_trans_N"/>
    <property type="match status" value="1"/>
</dbReference>
<dbReference type="SUPFAM" id="SSF50486">
    <property type="entry name" value="FMT C-terminal domain-like"/>
    <property type="match status" value="1"/>
</dbReference>
<dbReference type="SUPFAM" id="SSF53328">
    <property type="entry name" value="Formyltransferase"/>
    <property type="match status" value="1"/>
</dbReference>
<feature type="chain" id="PRO_0000083014" description="Methionyl-tRNA formyltransferase">
    <location>
        <begin position="1"/>
        <end position="339"/>
    </location>
</feature>
<feature type="binding site" evidence="1">
    <location>
        <begin position="110"/>
        <end position="113"/>
    </location>
    <ligand>
        <name>(6S)-5,6,7,8-tetrahydrofolate</name>
        <dbReference type="ChEBI" id="CHEBI:57453"/>
    </ligand>
</feature>
<sequence length="339" mass="38626">MNIIFWGTPIFCVPILEKLLKSNHNVLAVITQPDRRRGRGNKVLPSPIKQKALEENLPIYTPVNITKEKDIQAKIKQYNADIFVVVAFGQILPKSVLKLPKYGCWNIHASLLPRWRGAAPIQWSILSGDSETGVGLMAMEEGLDTGAVLLEKKLKLKLLENAEQLSQRLKDLSCNLIIEGIEILEKVREQSQSLSKLNLTKQEDINRTYSYARLLMKEDYLINWNDSGYNIHKQILGLYPNCYTYINSKRLKVLESIPINNKYDEFLDFRYKDIILKSQSIINNNGLIIDIIENIGIIVQTKDVPLLITKVKLEGKKESSQNALIQQLTLTNSQNKLGE</sequence>
<keyword id="KW-0648">Protein biosynthesis</keyword>
<keyword id="KW-1185">Reference proteome</keyword>
<keyword id="KW-0808">Transferase</keyword>
<evidence type="ECO:0000255" key="1">
    <source>
        <dbReference type="HAMAP-Rule" id="MF_00182"/>
    </source>
</evidence>
<organism>
    <name type="scientific">Prochlorococcus marinus (strain SARG / CCMP1375 / SS120)</name>
    <dbReference type="NCBI Taxonomy" id="167539"/>
    <lineage>
        <taxon>Bacteria</taxon>
        <taxon>Bacillati</taxon>
        <taxon>Cyanobacteriota</taxon>
        <taxon>Cyanophyceae</taxon>
        <taxon>Synechococcales</taxon>
        <taxon>Prochlorococcaceae</taxon>
        <taxon>Prochlorococcus</taxon>
    </lineage>
</organism>
<name>FMT_PROMA</name>
<proteinExistence type="inferred from homology"/>